<comment type="function">
    <text evidence="1">Together with its co-chaperonin GroES, plays an essential role in assisting protein folding. The GroEL-GroES system forms a nano-cage that allows encapsulation of the non-native substrate proteins and provides a physical environment optimized to promote and accelerate protein folding.</text>
</comment>
<comment type="catalytic activity">
    <reaction evidence="1">
        <text>ATP + H2O + a folded polypeptide = ADP + phosphate + an unfolded polypeptide.</text>
        <dbReference type="EC" id="5.6.1.7"/>
    </reaction>
</comment>
<comment type="subunit">
    <text evidence="1">Forms a cylinder of 14 subunits composed of two heptameric rings stacked back-to-back. Interacts with the co-chaperonin GroES.</text>
</comment>
<comment type="subcellular location">
    <subcellularLocation>
        <location evidence="1">Cytoplasm</location>
    </subcellularLocation>
</comment>
<comment type="similarity">
    <text evidence="1">Belongs to the chaperonin (HSP60) family.</text>
</comment>
<evidence type="ECO:0000255" key="1">
    <source>
        <dbReference type="HAMAP-Rule" id="MF_00600"/>
    </source>
</evidence>
<organism>
    <name type="scientific">Clostridium novyi (strain NT)</name>
    <dbReference type="NCBI Taxonomy" id="386415"/>
    <lineage>
        <taxon>Bacteria</taxon>
        <taxon>Bacillati</taxon>
        <taxon>Bacillota</taxon>
        <taxon>Clostridia</taxon>
        <taxon>Eubacteriales</taxon>
        <taxon>Clostridiaceae</taxon>
        <taxon>Clostridium</taxon>
    </lineage>
</organism>
<keyword id="KW-0067">ATP-binding</keyword>
<keyword id="KW-0143">Chaperone</keyword>
<keyword id="KW-0963">Cytoplasm</keyword>
<keyword id="KW-0413">Isomerase</keyword>
<keyword id="KW-0547">Nucleotide-binding</keyword>
<keyword id="KW-1185">Reference proteome</keyword>
<feature type="chain" id="PRO_1000025775" description="Chaperonin GroEL">
    <location>
        <begin position="1"/>
        <end position="543"/>
    </location>
</feature>
<feature type="binding site" evidence="1">
    <location>
        <begin position="29"/>
        <end position="32"/>
    </location>
    <ligand>
        <name>ATP</name>
        <dbReference type="ChEBI" id="CHEBI:30616"/>
    </ligand>
</feature>
<feature type="binding site" evidence="1">
    <location>
        <begin position="86"/>
        <end position="90"/>
    </location>
    <ligand>
        <name>ATP</name>
        <dbReference type="ChEBI" id="CHEBI:30616"/>
    </ligand>
</feature>
<feature type="binding site" evidence="1">
    <location>
        <position position="413"/>
    </location>
    <ligand>
        <name>ATP</name>
        <dbReference type="ChEBI" id="CHEBI:30616"/>
    </ligand>
</feature>
<feature type="binding site" evidence="1">
    <location>
        <begin position="477"/>
        <end position="479"/>
    </location>
    <ligand>
        <name>ATP</name>
        <dbReference type="ChEBI" id="CHEBI:30616"/>
    </ligand>
</feature>
<feature type="binding site" evidence="1">
    <location>
        <position position="493"/>
    </location>
    <ligand>
        <name>ATP</name>
        <dbReference type="ChEBI" id="CHEBI:30616"/>
    </ligand>
</feature>
<accession>A0Q2T1</accession>
<name>CH60_CLONN</name>
<dbReference type="EC" id="5.6.1.7" evidence="1"/>
<dbReference type="EMBL" id="CP000382">
    <property type="protein sequence ID" value="ABK62128.1"/>
    <property type="molecule type" value="Genomic_DNA"/>
</dbReference>
<dbReference type="RefSeq" id="WP_011722916.1">
    <property type="nucleotide sequence ID" value="NC_008593.1"/>
</dbReference>
<dbReference type="SMR" id="A0Q2T1"/>
<dbReference type="STRING" id="386415.NT01CX_0462"/>
<dbReference type="KEGG" id="cno:NT01CX_0462"/>
<dbReference type="eggNOG" id="COG0459">
    <property type="taxonomic scope" value="Bacteria"/>
</dbReference>
<dbReference type="HOGENOM" id="CLU_016503_3_0_9"/>
<dbReference type="Proteomes" id="UP000008220">
    <property type="component" value="Chromosome"/>
</dbReference>
<dbReference type="GO" id="GO:0005737">
    <property type="term" value="C:cytoplasm"/>
    <property type="evidence" value="ECO:0007669"/>
    <property type="project" value="UniProtKB-SubCell"/>
</dbReference>
<dbReference type="GO" id="GO:0005524">
    <property type="term" value="F:ATP binding"/>
    <property type="evidence" value="ECO:0007669"/>
    <property type="project" value="UniProtKB-UniRule"/>
</dbReference>
<dbReference type="GO" id="GO:0140662">
    <property type="term" value="F:ATP-dependent protein folding chaperone"/>
    <property type="evidence" value="ECO:0007669"/>
    <property type="project" value="InterPro"/>
</dbReference>
<dbReference type="GO" id="GO:0016853">
    <property type="term" value="F:isomerase activity"/>
    <property type="evidence" value="ECO:0007669"/>
    <property type="project" value="UniProtKB-KW"/>
</dbReference>
<dbReference type="GO" id="GO:0051082">
    <property type="term" value="F:unfolded protein binding"/>
    <property type="evidence" value="ECO:0007669"/>
    <property type="project" value="UniProtKB-UniRule"/>
</dbReference>
<dbReference type="GO" id="GO:0042026">
    <property type="term" value="P:protein refolding"/>
    <property type="evidence" value="ECO:0007669"/>
    <property type="project" value="UniProtKB-UniRule"/>
</dbReference>
<dbReference type="CDD" id="cd03344">
    <property type="entry name" value="GroEL"/>
    <property type="match status" value="1"/>
</dbReference>
<dbReference type="FunFam" id="3.50.7.10:FF:000001">
    <property type="entry name" value="60 kDa chaperonin"/>
    <property type="match status" value="1"/>
</dbReference>
<dbReference type="Gene3D" id="3.50.7.10">
    <property type="entry name" value="GroEL"/>
    <property type="match status" value="1"/>
</dbReference>
<dbReference type="Gene3D" id="1.10.560.10">
    <property type="entry name" value="GroEL-like equatorial domain"/>
    <property type="match status" value="1"/>
</dbReference>
<dbReference type="Gene3D" id="3.30.260.10">
    <property type="entry name" value="TCP-1-like chaperonin intermediate domain"/>
    <property type="match status" value="1"/>
</dbReference>
<dbReference type="HAMAP" id="MF_00600">
    <property type="entry name" value="CH60"/>
    <property type="match status" value="1"/>
</dbReference>
<dbReference type="InterPro" id="IPR018370">
    <property type="entry name" value="Chaperonin_Cpn60_CS"/>
</dbReference>
<dbReference type="InterPro" id="IPR001844">
    <property type="entry name" value="Cpn60/GroEL"/>
</dbReference>
<dbReference type="InterPro" id="IPR002423">
    <property type="entry name" value="Cpn60/GroEL/TCP-1"/>
</dbReference>
<dbReference type="InterPro" id="IPR027409">
    <property type="entry name" value="GroEL-like_apical_dom_sf"/>
</dbReference>
<dbReference type="InterPro" id="IPR027413">
    <property type="entry name" value="GROEL-like_equatorial_sf"/>
</dbReference>
<dbReference type="InterPro" id="IPR027410">
    <property type="entry name" value="TCP-1-like_intermed_sf"/>
</dbReference>
<dbReference type="NCBIfam" id="TIGR02348">
    <property type="entry name" value="GroEL"/>
    <property type="match status" value="1"/>
</dbReference>
<dbReference type="NCBIfam" id="NF000592">
    <property type="entry name" value="PRK00013.1"/>
    <property type="match status" value="1"/>
</dbReference>
<dbReference type="NCBIfam" id="NF009487">
    <property type="entry name" value="PRK12849.1"/>
    <property type="match status" value="1"/>
</dbReference>
<dbReference type="NCBIfam" id="NF009488">
    <property type="entry name" value="PRK12850.1"/>
    <property type="match status" value="1"/>
</dbReference>
<dbReference type="NCBIfam" id="NF009489">
    <property type="entry name" value="PRK12851.1"/>
    <property type="match status" value="1"/>
</dbReference>
<dbReference type="PANTHER" id="PTHR45633">
    <property type="entry name" value="60 KDA HEAT SHOCK PROTEIN, MITOCHONDRIAL"/>
    <property type="match status" value="1"/>
</dbReference>
<dbReference type="Pfam" id="PF00118">
    <property type="entry name" value="Cpn60_TCP1"/>
    <property type="match status" value="1"/>
</dbReference>
<dbReference type="PRINTS" id="PR00298">
    <property type="entry name" value="CHAPERONIN60"/>
</dbReference>
<dbReference type="SUPFAM" id="SSF52029">
    <property type="entry name" value="GroEL apical domain-like"/>
    <property type="match status" value="1"/>
</dbReference>
<dbReference type="SUPFAM" id="SSF48592">
    <property type="entry name" value="GroEL equatorial domain-like"/>
    <property type="match status" value="1"/>
</dbReference>
<dbReference type="SUPFAM" id="SSF54849">
    <property type="entry name" value="GroEL-intermediate domain like"/>
    <property type="match status" value="1"/>
</dbReference>
<dbReference type="PROSITE" id="PS00296">
    <property type="entry name" value="CHAPERONINS_CPN60"/>
    <property type="match status" value="1"/>
</dbReference>
<sequence length="543" mass="58152">MAKSILFGEESRRAMQAGVDKLANAVKVTLGPKGRNVVLDKKFGAPLITNDGVTIAKEIELEDMYENMGAQLVKEVATKTNDVAGDGTTTATLLAQAIIREGLKNVTAGANPMLIRKGIKLAVDTAVEQIKKSSKQVDGKEDIARVAAISAADPEIGKLIADAMEKVGNEGVITVEESNTMATELEVVEGMQFDRGYLSPYMVTDAEKMEAVLENPYILLTDKKISNIQEILPILEQIVQQGKKLLIIAEDIEGEALATLVVNKLRGTFTCVAVKAPGFGDRRKEMLRDIAILTGGEVISEEVGRELKDVTLDMLGTAESVKISKENTTIVNGKGNKEVIADRVGQIRRQIEETSSEFDKEKLQERLAKLAGGVAVVKVGAATETELKERKLRIEDALAATKAAVEEGIVAGGGTAYLRAIKEVEKLTDDNAEVRLGIAIIRRALEEPVRQIAANAGLEGSVIIDKIKNSEDGIGFDALEGEYTNMMQKGIVDPAKVTRSALQNAASVASTFLTTECVVAEIPEKNPMPAAPGMGGMGMDGMY</sequence>
<protein>
    <recommendedName>
        <fullName evidence="1">Chaperonin GroEL</fullName>
        <ecNumber evidence="1">5.6.1.7</ecNumber>
    </recommendedName>
    <alternativeName>
        <fullName evidence="1">60 kDa chaperonin</fullName>
    </alternativeName>
    <alternativeName>
        <fullName evidence="1">Chaperonin-60</fullName>
        <shortName evidence="1">Cpn60</shortName>
    </alternativeName>
</protein>
<gene>
    <name evidence="1" type="primary">groEL</name>
    <name evidence="1" type="synonym">groL</name>
    <name type="ordered locus">NT01CX_0462</name>
</gene>
<reference key="1">
    <citation type="journal article" date="2006" name="Nat. Biotechnol.">
        <title>The genome and transcriptomes of the anti-tumor agent Clostridium novyi-NT.</title>
        <authorList>
            <person name="Bettegowda C."/>
            <person name="Huang X."/>
            <person name="Lin J."/>
            <person name="Cheong I."/>
            <person name="Kohli M."/>
            <person name="Szabo S.A."/>
            <person name="Zhang X."/>
            <person name="Diaz L.A. Jr."/>
            <person name="Velculescu V.E."/>
            <person name="Parmigiani G."/>
            <person name="Kinzler K.W."/>
            <person name="Vogelstein B."/>
            <person name="Zhou S."/>
        </authorList>
    </citation>
    <scope>NUCLEOTIDE SEQUENCE [LARGE SCALE GENOMIC DNA]</scope>
    <source>
        <strain>NT</strain>
    </source>
</reference>
<proteinExistence type="inferred from homology"/>